<name>VAP41_ARATH</name>
<organism>
    <name type="scientific">Arabidopsis thaliana</name>
    <name type="common">Mouse-ear cress</name>
    <dbReference type="NCBI Taxonomy" id="3702"/>
    <lineage>
        <taxon>Eukaryota</taxon>
        <taxon>Viridiplantae</taxon>
        <taxon>Streptophyta</taxon>
        <taxon>Embryophyta</taxon>
        <taxon>Tracheophyta</taxon>
        <taxon>Spermatophyta</taxon>
        <taxon>Magnoliopsida</taxon>
        <taxon>eudicotyledons</taxon>
        <taxon>Gunneridae</taxon>
        <taxon>Pentapetalae</taxon>
        <taxon>rosids</taxon>
        <taxon>malvids</taxon>
        <taxon>Brassicales</taxon>
        <taxon>Brassicaceae</taxon>
        <taxon>Camelineae</taxon>
        <taxon>Arabidopsis</taxon>
    </lineage>
</organism>
<proteinExistence type="evidence at transcript level"/>
<dbReference type="EMBL" id="U83655">
    <property type="protein sequence ID" value="AAB41326.1"/>
    <property type="status" value="ALT_FRAME"/>
    <property type="molecule type" value="mRNA"/>
</dbReference>
<dbReference type="EMBL" id="AB018115">
    <property type="protein sequence ID" value="BAA97133.1"/>
    <property type="status" value="ALT_SEQ"/>
    <property type="molecule type" value="Genomic_DNA"/>
</dbReference>
<dbReference type="EMBL" id="CP002688">
    <property type="protein sequence ID" value="AED96452.1"/>
    <property type="molecule type" value="Genomic_DNA"/>
</dbReference>
<dbReference type="EMBL" id="BT025794">
    <property type="protein sequence ID" value="ABF83684.1"/>
    <property type="molecule type" value="mRNA"/>
</dbReference>
<dbReference type="EMBL" id="AK221411">
    <property type="protein sequence ID" value="BAD94385.1"/>
    <property type="molecule type" value="mRNA"/>
</dbReference>
<dbReference type="RefSeq" id="NP_568804.1">
    <property type="nucleotide sequence ID" value="NM_124791.3"/>
</dbReference>
<dbReference type="SMR" id="Q1ECE0"/>
<dbReference type="BioGRID" id="20742">
    <property type="interactions" value="3"/>
</dbReference>
<dbReference type="FunCoup" id="Q1ECE0">
    <property type="interactions" value="142"/>
</dbReference>
<dbReference type="IntAct" id="Q1ECE0">
    <property type="interactions" value="3"/>
</dbReference>
<dbReference type="STRING" id="3702.Q1ECE0"/>
<dbReference type="iPTMnet" id="Q1ECE0"/>
<dbReference type="SwissPalm" id="Q1ECE0"/>
<dbReference type="PaxDb" id="3702-AT5G54110.1"/>
<dbReference type="ProteomicsDB" id="242314"/>
<dbReference type="EnsemblPlants" id="AT5G54110.1">
    <property type="protein sequence ID" value="AT5G54110.1"/>
    <property type="gene ID" value="AT5G54110"/>
</dbReference>
<dbReference type="GeneID" id="835498"/>
<dbReference type="Gramene" id="AT5G54110.1">
    <property type="protein sequence ID" value="AT5G54110.1"/>
    <property type="gene ID" value="AT5G54110"/>
</dbReference>
<dbReference type="KEGG" id="ath:AT5G54110"/>
<dbReference type="Araport" id="AT5G54110"/>
<dbReference type="TAIR" id="AT5G54110">
    <property type="gene designation" value="MAMI"/>
</dbReference>
<dbReference type="eggNOG" id="KOG0439">
    <property type="taxonomic scope" value="Eukaryota"/>
</dbReference>
<dbReference type="HOGENOM" id="CLU_067947_0_0_1"/>
<dbReference type="InParanoid" id="Q1ECE0"/>
<dbReference type="OMA" id="TIENTCK"/>
<dbReference type="OrthoDB" id="845153at2759"/>
<dbReference type="PhylomeDB" id="Q1ECE0"/>
<dbReference type="PRO" id="PR:Q1ECE0"/>
<dbReference type="Proteomes" id="UP000006548">
    <property type="component" value="Chromosome 5"/>
</dbReference>
<dbReference type="ExpressionAtlas" id="Q1ECE0">
    <property type="expression patterns" value="baseline and differential"/>
</dbReference>
<dbReference type="GO" id="GO:0005789">
    <property type="term" value="C:endoplasmic reticulum membrane"/>
    <property type="evidence" value="ECO:0007669"/>
    <property type="project" value="InterPro"/>
</dbReference>
<dbReference type="GO" id="GO:0005886">
    <property type="term" value="C:plasma membrane"/>
    <property type="evidence" value="ECO:0000314"/>
    <property type="project" value="TAIR"/>
</dbReference>
<dbReference type="GO" id="GO:0009536">
    <property type="term" value="C:plastid"/>
    <property type="evidence" value="ECO:0007005"/>
    <property type="project" value="TAIR"/>
</dbReference>
<dbReference type="GO" id="GO:0006970">
    <property type="term" value="P:response to osmotic stress"/>
    <property type="evidence" value="ECO:0000270"/>
    <property type="project" value="TAIR"/>
</dbReference>
<dbReference type="FunFam" id="2.60.40.10:FF:001596">
    <property type="entry name" value="vesicle-associated protein 4-1-like"/>
    <property type="match status" value="1"/>
</dbReference>
<dbReference type="Gene3D" id="2.60.40.10">
    <property type="entry name" value="Immunoglobulins"/>
    <property type="match status" value="1"/>
</dbReference>
<dbReference type="InterPro" id="IPR013783">
    <property type="entry name" value="Ig-like_fold"/>
</dbReference>
<dbReference type="InterPro" id="IPR000535">
    <property type="entry name" value="MSP_dom"/>
</dbReference>
<dbReference type="InterPro" id="IPR008962">
    <property type="entry name" value="PapD-like_sf"/>
</dbReference>
<dbReference type="InterPro" id="IPR016763">
    <property type="entry name" value="VAP"/>
</dbReference>
<dbReference type="PANTHER" id="PTHR10809">
    <property type="entry name" value="VESICLE-ASSOCIATED MEMBRANE PROTEIN-ASSOCIATED PROTEIN"/>
    <property type="match status" value="1"/>
</dbReference>
<dbReference type="PANTHER" id="PTHR10809:SF101">
    <property type="entry name" value="VESICLE-ASSOCIATED PROTEIN 4-1"/>
    <property type="match status" value="1"/>
</dbReference>
<dbReference type="Pfam" id="PF00635">
    <property type="entry name" value="Motile_Sperm"/>
    <property type="match status" value="1"/>
</dbReference>
<dbReference type="SUPFAM" id="SSF49354">
    <property type="entry name" value="PapD-like"/>
    <property type="match status" value="1"/>
</dbReference>
<dbReference type="PROSITE" id="PS50202">
    <property type="entry name" value="MSP"/>
    <property type="match status" value="1"/>
</dbReference>
<comment type="function">
    <text evidence="1">May play a role in vesicle trafficking.</text>
</comment>
<comment type="induction">
    <text evidence="6">By treatment with mannitol.</text>
</comment>
<comment type="similarity">
    <text evidence="7">Belongs to the VAMP-associated protein (VAP) (TC 9.B.17) family.</text>
</comment>
<comment type="sequence caution" evidence="7">
    <conflict type="frameshift">
        <sequence resource="EMBL-CDS" id="AAB41326"/>
    </conflict>
</comment>
<comment type="sequence caution" evidence="7">
    <conflict type="erroneous gene model prediction">
        <sequence resource="EMBL-CDS" id="BAA97133"/>
    </conflict>
</comment>
<accession>Q1ECE0</accession>
<accession>P93040</accession>
<accession>Q56YB2</accession>
<accession>Q9LVV9</accession>
<evidence type="ECO:0000250" key="1"/>
<evidence type="ECO:0000250" key="2">
    <source>
        <dbReference type="UniProtKB" id="Q8VYN2"/>
    </source>
</evidence>
<evidence type="ECO:0000255" key="3"/>
<evidence type="ECO:0000255" key="4">
    <source>
        <dbReference type="PROSITE-ProRule" id="PRU00132"/>
    </source>
</evidence>
<evidence type="ECO:0000256" key="5">
    <source>
        <dbReference type="SAM" id="MobiDB-lite"/>
    </source>
</evidence>
<evidence type="ECO:0000269" key="6">
    <source>
    </source>
</evidence>
<evidence type="ECO:0000305" key="7"/>
<sequence length="266" mass="30255">MPIGDRQNPSVEKKKNLFRLCPFWQRRSTTSSSSTQNPNQNYRSRHGNRNTDISAVSKPPLTMSSVARSLLPARRRLRLDPSSYLYFPYEPGKQVRSAIKLKNTSKSHTAFKFQTTAPKSCYMRPPGGVLAPGESVFATVFKFVEHPENNEKQPLNQKSKVKFKIMSLKVKPGVEYVPELFDEQKDQVAVEQVLRVIFIDADRPSAALEKLKRQLDEAEAAVEARKKPPPETGPRVVGEGLVIDEWKERREKYLARQQVESVDSLS</sequence>
<feature type="chain" id="PRO_0000402176" description="Vesicle-associated protein 4-1">
    <location>
        <begin position="1"/>
        <end position="266"/>
    </location>
</feature>
<feature type="domain" description="MSP" evidence="4">
    <location>
        <begin position="76"/>
        <end position="199"/>
    </location>
</feature>
<feature type="region of interest" description="Disordered" evidence="5">
    <location>
        <begin position="28"/>
        <end position="57"/>
    </location>
</feature>
<feature type="region of interest" description="Disordered" evidence="5">
    <location>
        <begin position="219"/>
        <end position="239"/>
    </location>
</feature>
<feature type="coiled-coil region" evidence="3">
    <location>
        <begin position="200"/>
        <end position="228"/>
    </location>
</feature>
<feature type="compositionally biased region" description="Basic and acidic residues" evidence="5">
    <location>
        <begin position="219"/>
        <end position="229"/>
    </location>
</feature>
<feature type="modified residue" description="Phosphoserine" evidence="2">
    <location>
        <position position="264"/>
    </location>
</feature>
<feature type="sequence conflict" description="In Ref. 5; BAD94385." evidence="7" ref="5">
    <original>D</original>
    <variation>G</variation>
    <location>
        <position position="80"/>
    </location>
</feature>
<feature type="sequence conflict" description="In Ref. 5; BAD94385." evidence="7" ref="5">
    <original>F</original>
    <variation>L</variation>
    <location>
        <position position="141"/>
    </location>
</feature>
<reference key="1">
    <citation type="journal article" date="1997" name="Biochim. Biophys. Acta">
        <title>Osmotic stress activated expression of an Arabidopsis plasma membrane-associated protein: sequence and predicted secondary structure.</title>
        <authorList>
            <person name="Galaud J.P."/>
            <person name="Laval V."/>
            <person name="Carriere M."/>
            <person name="Barre A."/>
            <person name="Canut H."/>
            <person name="Rouge P."/>
            <person name="Pont-Lezica R."/>
        </authorList>
    </citation>
    <scope>NUCLEOTIDE SEQUENCE [MRNA]</scope>
    <scope>INDUCTION</scope>
</reference>
<reference key="2">
    <citation type="journal article" date="2000" name="DNA Res.">
        <title>Structural analysis of Arabidopsis thaliana chromosome 5. X. Sequence features of the regions of 3,076,755 bp covered by sixty P1 and TAC clones.</title>
        <authorList>
            <person name="Sato S."/>
            <person name="Nakamura Y."/>
            <person name="Kaneko T."/>
            <person name="Katoh T."/>
            <person name="Asamizu E."/>
            <person name="Kotani H."/>
            <person name="Tabata S."/>
        </authorList>
    </citation>
    <scope>NUCLEOTIDE SEQUENCE [LARGE SCALE GENOMIC DNA]</scope>
    <source>
        <strain>cv. Columbia</strain>
    </source>
</reference>
<reference key="3">
    <citation type="journal article" date="2017" name="Plant J.">
        <title>Araport11: a complete reannotation of the Arabidopsis thaliana reference genome.</title>
        <authorList>
            <person name="Cheng C.Y."/>
            <person name="Krishnakumar V."/>
            <person name="Chan A.P."/>
            <person name="Thibaud-Nissen F."/>
            <person name="Schobel S."/>
            <person name="Town C.D."/>
        </authorList>
    </citation>
    <scope>GENOME REANNOTATION</scope>
    <source>
        <strain>cv. Columbia</strain>
    </source>
</reference>
<reference key="4">
    <citation type="submission" date="2006-06" db="EMBL/GenBank/DDBJ databases">
        <title>Arabidopsis ORF clones.</title>
        <authorList>
            <person name="Kim C.J."/>
            <person name="Chen H."/>
            <person name="Quinitio C."/>
            <person name="Shinn P."/>
            <person name="Ecker J.R."/>
        </authorList>
    </citation>
    <scope>NUCLEOTIDE SEQUENCE [LARGE SCALE MRNA]</scope>
    <source>
        <strain>cv. Columbia</strain>
    </source>
</reference>
<reference key="5">
    <citation type="submission" date="2005-03" db="EMBL/GenBank/DDBJ databases">
        <title>Large-scale analysis of RIKEN Arabidopsis full-length (RAFL) cDNAs.</title>
        <authorList>
            <person name="Totoki Y."/>
            <person name="Seki M."/>
            <person name="Ishida J."/>
            <person name="Nakajima M."/>
            <person name="Enju A."/>
            <person name="Kamiya A."/>
            <person name="Narusaka M."/>
            <person name="Shin-i T."/>
            <person name="Nakagawa M."/>
            <person name="Sakamoto N."/>
            <person name="Oishi K."/>
            <person name="Kohara Y."/>
            <person name="Kobayashi M."/>
            <person name="Toyoda A."/>
            <person name="Sakaki Y."/>
            <person name="Sakurai T."/>
            <person name="Iida K."/>
            <person name="Akiyama K."/>
            <person name="Satou M."/>
            <person name="Toyoda T."/>
            <person name="Konagaya A."/>
            <person name="Carninci P."/>
            <person name="Kawai J."/>
            <person name="Hayashizaki Y."/>
            <person name="Shinozaki K."/>
        </authorList>
    </citation>
    <scope>NUCLEOTIDE SEQUENCE [LARGE SCALE MRNA] OF 1-233</scope>
    <source>
        <strain>cv. Columbia</strain>
    </source>
</reference>
<gene>
    <name type="primary">PVA41</name>
    <name type="synonym">MAMI</name>
    <name type="ordered locus">At5g54110</name>
    <name type="ORF">MJP23.9</name>
</gene>
<keyword id="KW-0175">Coiled coil</keyword>
<keyword id="KW-0597">Phosphoprotein</keyword>
<keyword id="KW-1185">Reference proteome</keyword>
<protein>
    <recommendedName>
        <fullName>Vesicle-associated protein 4-1</fullName>
    </recommendedName>
    <alternativeName>
        <fullName>Plant VAP homolog 4-1</fullName>
        <shortName>AtPVA41</shortName>
    </alternativeName>
    <alternativeName>
        <fullName>Protein MEMBRANE-ASSOCIATED MANNITOL-INDUCED</fullName>
        <shortName>AtMAMI</shortName>
    </alternativeName>
    <alternativeName>
        <fullName>VAMP-associated protein 4-1</fullName>
    </alternativeName>
</protein>